<proteinExistence type="inferred from homology"/>
<comment type="function">
    <text evidence="1">Part of the high-affinity ATP-driven potassium transport (or Kdp) system, which catalyzes the hydrolysis of ATP coupled with the electrogenic transport of potassium into the cytoplasm. This subunit is responsible for energy coupling to the transport system and for the release of the potassium ions to the cytoplasm.</text>
</comment>
<comment type="catalytic activity">
    <reaction evidence="1">
        <text>K(+)(out) + ATP + H2O = K(+)(in) + ADP + phosphate + H(+)</text>
        <dbReference type="Rhea" id="RHEA:16777"/>
        <dbReference type="ChEBI" id="CHEBI:15377"/>
        <dbReference type="ChEBI" id="CHEBI:15378"/>
        <dbReference type="ChEBI" id="CHEBI:29103"/>
        <dbReference type="ChEBI" id="CHEBI:30616"/>
        <dbReference type="ChEBI" id="CHEBI:43474"/>
        <dbReference type="ChEBI" id="CHEBI:456216"/>
        <dbReference type="EC" id="7.2.2.6"/>
    </reaction>
    <physiologicalReaction direction="left-to-right" evidence="1">
        <dbReference type="Rhea" id="RHEA:16778"/>
    </physiologicalReaction>
</comment>
<comment type="subunit">
    <text evidence="1">The system is composed of three essential subunits: KdpA, KdpB and KdpC.</text>
</comment>
<comment type="subcellular location">
    <subcellularLocation>
        <location evidence="1">Cell inner membrane</location>
        <topology evidence="1">Multi-pass membrane protein</topology>
    </subcellularLocation>
</comment>
<comment type="similarity">
    <text evidence="1">Belongs to the cation transport ATPase (P-type) (TC 3.A.3) family. Type IA subfamily.</text>
</comment>
<dbReference type="EC" id="7.2.2.6" evidence="1"/>
<dbReference type="EMBL" id="CP000247">
    <property type="protein sequence ID" value="ABG68742.1"/>
    <property type="molecule type" value="Genomic_DNA"/>
</dbReference>
<dbReference type="RefSeq" id="WP_000087998.1">
    <property type="nucleotide sequence ID" value="NC_008253.1"/>
</dbReference>
<dbReference type="SMR" id="Q0TJY9"/>
<dbReference type="KEGG" id="ecp:ECP_0716"/>
<dbReference type="HOGENOM" id="CLU_025728_2_0_6"/>
<dbReference type="Proteomes" id="UP000009182">
    <property type="component" value="Chromosome"/>
</dbReference>
<dbReference type="GO" id="GO:0005886">
    <property type="term" value="C:plasma membrane"/>
    <property type="evidence" value="ECO:0007669"/>
    <property type="project" value="UniProtKB-SubCell"/>
</dbReference>
<dbReference type="GO" id="GO:0005524">
    <property type="term" value="F:ATP binding"/>
    <property type="evidence" value="ECO:0007669"/>
    <property type="project" value="UniProtKB-UniRule"/>
</dbReference>
<dbReference type="GO" id="GO:0016887">
    <property type="term" value="F:ATP hydrolysis activity"/>
    <property type="evidence" value="ECO:0007669"/>
    <property type="project" value="InterPro"/>
</dbReference>
<dbReference type="GO" id="GO:0000287">
    <property type="term" value="F:magnesium ion binding"/>
    <property type="evidence" value="ECO:0007669"/>
    <property type="project" value="UniProtKB-UniRule"/>
</dbReference>
<dbReference type="GO" id="GO:0008556">
    <property type="term" value="F:P-type potassium transmembrane transporter activity"/>
    <property type="evidence" value="ECO:0007669"/>
    <property type="project" value="UniProtKB-UniRule"/>
</dbReference>
<dbReference type="CDD" id="cd02078">
    <property type="entry name" value="P-type_ATPase_K"/>
    <property type="match status" value="1"/>
</dbReference>
<dbReference type="FunFam" id="2.70.150.10:FF:000010">
    <property type="entry name" value="Potassium-transporting ATPase ATP-binding subunit"/>
    <property type="match status" value="1"/>
</dbReference>
<dbReference type="FunFam" id="3.40.1110.10:FF:000007">
    <property type="entry name" value="Potassium-transporting ATPase ATP-binding subunit"/>
    <property type="match status" value="1"/>
</dbReference>
<dbReference type="Gene3D" id="3.40.1110.10">
    <property type="entry name" value="Calcium-transporting ATPase, cytoplasmic domain N"/>
    <property type="match status" value="1"/>
</dbReference>
<dbReference type="Gene3D" id="2.70.150.10">
    <property type="entry name" value="Calcium-transporting ATPase, cytoplasmic transduction domain A"/>
    <property type="match status" value="1"/>
</dbReference>
<dbReference type="Gene3D" id="3.40.50.1000">
    <property type="entry name" value="HAD superfamily/HAD-like"/>
    <property type="match status" value="1"/>
</dbReference>
<dbReference type="HAMAP" id="MF_00285">
    <property type="entry name" value="KdpB"/>
    <property type="match status" value="1"/>
</dbReference>
<dbReference type="InterPro" id="IPR023299">
    <property type="entry name" value="ATPase_P-typ_cyto_dom_N"/>
</dbReference>
<dbReference type="InterPro" id="IPR018303">
    <property type="entry name" value="ATPase_P-typ_P_site"/>
</dbReference>
<dbReference type="InterPro" id="IPR023298">
    <property type="entry name" value="ATPase_P-typ_TM_dom_sf"/>
</dbReference>
<dbReference type="InterPro" id="IPR008250">
    <property type="entry name" value="ATPase_P-typ_transduc_dom_A_sf"/>
</dbReference>
<dbReference type="InterPro" id="IPR036412">
    <property type="entry name" value="HAD-like_sf"/>
</dbReference>
<dbReference type="InterPro" id="IPR023214">
    <property type="entry name" value="HAD_sf"/>
</dbReference>
<dbReference type="InterPro" id="IPR006391">
    <property type="entry name" value="P-type_ATPase_bsu_IA"/>
</dbReference>
<dbReference type="InterPro" id="IPR001757">
    <property type="entry name" value="P_typ_ATPase"/>
</dbReference>
<dbReference type="InterPro" id="IPR044492">
    <property type="entry name" value="P_typ_ATPase_HD_dom"/>
</dbReference>
<dbReference type="NCBIfam" id="TIGR01494">
    <property type="entry name" value="ATPase_P-type"/>
    <property type="match status" value="2"/>
</dbReference>
<dbReference type="NCBIfam" id="TIGR01497">
    <property type="entry name" value="kdpB"/>
    <property type="match status" value="1"/>
</dbReference>
<dbReference type="PANTHER" id="PTHR43743">
    <property type="entry name" value="POTASSIUM-TRANSPORTING ATPASE ATP-BINDING SUBUNIT"/>
    <property type="match status" value="1"/>
</dbReference>
<dbReference type="PANTHER" id="PTHR43743:SF1">
    <property type="entry name" value="POTASSIUM-TRANSPORTING ATPASE ATP-BINDING SUBUNIT"/>
    <property type="match status" value="1"/>
</dbReference>
<dbReference type="Pfam" id="PF00122">
    <property type="entry name" value="E1-E2_ATPase"/>
    <property type="match status" value="1"/>
</dbReference>
<dbReference type="Pfam" id="PF00702">
    <property type="entry name" value="Hydrolase"/>
    <property type="match status" value="1"/>
</dbReference>
<dbReference type="PRINTS" id="PR00119">
    <property type="entry name" value="CATATPASE"/>
</dbReference>
<dbReference type="SFLD" id="SFLDG00002">
    <property type="entry name" value="C1.7:_P-type_atpase_like"/>
    <property type="match status" value="1"/>
</dbReference>
<dbReference type="SFLD" id="SFLDF00027">
    <property type="entry name" value="p-type_atpase"/>
    <property type="match status" value="1"/>
</dbReference>
<dbReference type="SUPFAM" id="SSF81653">
    <property type="entry name" value="Calcium ATPase, transduction domain A"/>
    <property type="match status" value="1"/>
</dbReference>
<dbReference type="SUPFAM" id="SSF81665">
    <property type="entry name" value="Calcium ATPase, transmembrane domain M"/>
    <property type="match status" value="1"/>
</dbReference>
<dbReference type="SUPFAM" id="SSF56784">
    <property type="entry name" value="HAD-like"/>
    <property type="match status" value="1"/>
</dbReference>
<dbReference type="SUPFAM" id="SSF81660">
    <property type="entry name" value="Metal cation-transporting ATPase, ATP-binding domain N"/>
    <property type="match status" value="1"/>
</dbReference>
<dbReference type="PROSITE" id="PS00154">
    <property type="entry name" value="ATPASE_E1_E2"/>
    <property type="match status" value="1"/>
</dbReference>
<accession>Q0TJY9</accession>
<organism>
    <name type="scientific">Escherichia coli O6:K15:H31 (strain 536 / UPEC)</name>
    <dbReference type="NCBI Taxonomy" id="362663"/>
    <lineage>
        <taxon>Bacteria</taxon>
        <taxon>Pseudomonadati</taxon>
        <taxon>Pseudomonadota</taxon>
        <taxon>Gammaproteobacteria</taxon>
        <taxon>Enterobacterales</taxon>
        <taxon>Enterobacteriaceae</taxon>
        <taxon>Escherichia</taxon>
    </lineage>
</organism>
<protein>
    <recommendedName>
        <fullName evidence="1">Potassium-transporting ATPase ATP-binding subunit</fullName>
        <ecNumber evidence="1">7.2.2.6</ecNumber>
    </recommendedName>
    <alternativeName>
        <fullName evidence="1">ATP phosphohydrolase [potassium-transporting] B chain</fullName>
    </alternativeName>
    <alternativeName>
        <fullName evidence="1">Potassium-binding and translocating subunit B</fullName>
    </alternativeName>
    <alternativeName>
        <fullName evidence="1">Potassium-translocating ATPase B chain</fullName>
    </alternativeName>
</protein>
<gene>
    <name evidence="1" type="primary">kdpB</name>
    <name type="ordered locus">ECP_0716</name>
</gene>
<feature type="chain" id="PRO_1000022439" description="Potassium-transporting ATPase ATP-binding subunit">
    <location>
        <begin position="1"/>
        <end position="682"/>
    </location>
</feature>
<feature type="transmembrane region" description="Helical" evidence="1">
    <location>
        <begin position="34"/>
        <end position="54"/>
    </location>
</feature>
<feature type="transmembrane region" description="Helical" evidence="1">
    <location>
        <begin position="62"/>
        <end position="82"/>
    </location>
</feature>
<feature type="transmembrane region" description="Helical" evidence="1">
    <location>
        <begin position="219"/>
        <end position="239"/>
    </location>
</feature>
<feature type="transmembrane region" description="Helical" evidence="1">
    <location>
        <begin position="254"/>
        <end position="274"/>
    </location>
</feature>
<feature type="transmembrane region" description="Helical" evidence="1">
    <location>
        <begin position="588"/>
        <end position="608"/>
    </location>
</feature>
<feature type="transmembrane region" description="Helical" evidence="1">
    <location>
        <begin position="616"/>
        <end position="636"/>
    </location>
</feature>
<feature type="transmembrane region" description="Helical" evidence="1">
    <location>
        <begin position="656"/>
        <end position="676"/>
    </location>
</feature>
<feature type="active site" description="4-aspartylphosphate intermediate" evidence="1">
    <location>
        <position position="307"/>
    </location>
</feature>
<feature type="binding site" evidence="1">
    <location>
        <position position="344"/>
    </location>
    <ligand>
        <name>ATP</name>
        <dbReference type="ChEBI" id="CHEBI:30616"/>
    </ligand>
</feature>
<feature type="binding site" evidence="1">
    <location>
        <position position="348"/>
    </location>
    <ligand>
        <name>ATP</name>
        <dbReference type="ChEBI" id="CHEBI:30616"/>
    </ligand>
</feature>
<feature type="binding site" evidence="1">
    <location>
        <begin position="377"/>
        <end position="384"/>
    </location>
    <ligand>
        <name>ATP</name>
        <dbReference type="ChEBI" id="CHEBI:30616"/>
    </ligand>
</feature>
<feature type="binding site" evidence="1">
    <location>
        <position position="395"/>
    </location>
    <ligand>
        <name>ATP</name>
        <dbReference type="ChEBI" id="CHEBI:30616"/>
    </ligand>
</feature>
<feature type="binding site" evidence="1">
    <location>
        <position position="518"/>
    </location>
    <ligand>
        <name>Mg(2+)</name>
        <dbReference type="ChEBI" id="CHEBI:18420"/>
    </ligand>
</feature>
<feature type="binding site" evidence="1">
    <location>
        <position position="522"/>
    </location>
    <ligand>
        <name>Mg(2+)</name>
        <dbReference type="ChEBI" id="CHEBI:18420"/>
    </ligand>
</feature>
<reference key="1">
    <citation type="journal article" date="2006" name="Mol. Microbiol.">
        <title>Role of pathogenicity island-associated integrases in the genome plasticity of uropathogenic Escherichia coli strain 536.</title>
        <authorList>
            <person name="Hochhut B."/>
            <person name="Wilde C."/>
            <person name="Balling G."/>
            <person name="Middendorf B."/>
            <person name="Dobrindt U."/>
            <person name="Brzuszkiewicz E."/>
            <person name="Gottschalk G."/>
            <person name="Carniel E."/>
            <person name="Hacker J."/>
        </authorList>
    </citation>
    <scope>NUCLEOTIDE SEQUENCE [LARGE SCALE GENOMIC DNA]</scope>
    <source>
        <strain>536 / UPEC</strain>
    </source>
</reference>
<keyword id="KW-0067">ATP-binding</keyword>
<keyword id="KW-0997">Cell inner membrane</keyword>
<keyword id="KW-1003">Cell membrane</keyword>
<keyword id="KW-0406">Ion transport</keyword>
<keyword id="KW-0460">Magnesium</keyword>
<keyword id="KW-0472">Membrane</keyword>
<keyword id="KW-0479">Metal-binding</keyword>
<keyword id="KW-0547">Nucleotide-binding</keyword>
<keyword id="KW-0597">Phosphoprotein</keyword>
<keyword id="KW-0630">Potassium</keyword>
<keyword id="KW-0633">Potassium transport</keyword>
<keyword id="KW-1278">Translocase</keyword>
<keyword id="KW-0812">Transmembrane</keyword>
<keyword id="KW-1133">Transmembrane helix</keyword>
<keyword id="KW-0813">Transport</keyword>
<sequence>MSRKQLALFEPTLVVQALKEAVKKLNPQAQWRNPVMFIVWIGSLLTTCISIAMASGVMPGNALFSAAISGWLWVTVLFANFAEALAEGRSKAQANSLKGVKKTAFARKLREPKYGAAADKVPADQLRKGDIVLVEAGDIIPCDGEVIEGGASVDESAITGESAPVIRESGGDFASVTGGTRILSDWLVIECSVNPGETFLDRMIAMVEGAQRRKTPNEIALTILLIALTIVFLLATATLWPFSAWGGNAVSVTVLVALLVCLIPTTIGGLLSAIGVAGMSRMLGANVIATSGRAVEAAGDVDVLLLDKTGTITLGNRQASEFIPAQGVEEKALADAAQLASLADETPEGRSIVILAKQRFNLRERDVQSLHATFVPFTAQSRMSGINIDNRMIRKGSVDAIRRHVEANGGHFPADVDQKVDQVARQGATPLVVVEGSRVLGVIALKDIVKGGIKERFAQLRKMGIKTVMITGDNRLTAAAIAAEAGVDDFLAEATPEAKLALIRQYQAEGRLVAMTGDGTNDAPALAQADVAVAMNSGTQAAKEAGNMVDLDSNPTKLIEVVHIGKQMLMTRGSLTTFSIANDVAKYFAIIPAAFAATYPQLNALNIMRLHSPDSAILSAVIFNALIIVFLIPLALKGVSYKPLTASAMLRRNLWIYGLGGLLVPFIGIKVIDLLLTVCGLV</sequence>
<evidence type="ECO:0000255" key="1">
    <source>
        <dbReference type="HAMAP-Rule" id="MF_00285"/>
    </source>
</evidence>
<name>KDPB_ECOL5</name>